<reference key="1">
    <citation type="journal article" date="2006" name="PLoS Genet.">
        <title>Genome sequence of Rickettsia bellii illuminates the role of amoebae in gene exchanges between intracellular pathogens.</title>
        <authorList>
            <person name="Ogata H."/>
            <person name="La Scola B."/>
            <person name="Audic S."/>
            <person name="Renesto P."/>
            <person name="Blanc G."/>
            <person name="Robert C."/>
            <person name="Fournier P.-E."/>
            <person name="Claverie J.-M."/>
            <person name="Raoult D."/>
        </authorList>
    </citation>
    <scope>NUCLEOTIDE SEQUENCE [LARGE SCALE GENOMIC DNA]</scope>
    <source>
        <strain>RML369-C</strain>
    </source>
</reference>
<evidence type="ECO:0000250" key="1"/>
<evidence type="ECO:0000305" key="2"/>
<proteinExistence type="inferred from homology"/>
<name>ILVE_RICBR</name>
<dbReference type="EC" id="2.6.1.42"/>
<dbReference type="EMBL" id="CP000087">
    <property type="protein sequence ID" value="ABE04822.1"/>
    <property type="molecule type" value="Genomic_DNA"/>
</dbReference>
<dbReference type="RefSeq" id="WP_011477409.1">
    <property type="nucleotide sequence ID" value="NC_007940.1"/>
</dbReference>
<dbReference type="SMR" id="Q1RIJ2"/>
<dbReference type="KEGG" id="rbe:RBE_0741"/>
<dbReference type="eggNOG" id="COG0115">
    <property type="taxonomic scope" value="Bacteria"/>
</dbReference>
<dbReference type="HOGENOM" id="CLU_020844_3_1_5"/>
<dbReference type="OrthoDB" id="21319at2"/>
<dbReference type="UniPathway" id="UPA00047">
    <property type="reaction ID" value="UER00058"/>
</dbReference>
<dbReference type="UniPathway" id="UPA00048">
    <property type="reaction ID" value="UER00073"/>
</dbReference>
<dbReference type="UniPathway" id="UPA00049">
    <property type="reaction ID" value="UER00062"/>
</dbReference>
<dbReference type="Proteomes" id="UP000001951">
    <property type="component" value="Chromosome"/>
</dbReference>
<dbReference type="GO" id="GO:0005829">
    <property type="term" value="C:cytosol"/>
    <property type="evidence" value="ECO:0007669"/>
    <property type="project" value="TreeGrafter"/>
</dbReference>
<dbReference type="GO" id="GO:0052656">
    <property type="term" value="F:L-isoleucine-2-oxoglutarate transaminase activity"/>
    <property type="evidence" value="ECO:0007669"/>
    <property type="project" value="RHEA"/>
</dbReference>
<dbReference type="GO" id="GO:0052654">
    <property type="term" value="F:L-leucine-2-oxoglutarate transaminase activity"/>
    <property type="evidence" value="ECO:0007669"/>
    <property type="project" value="RHEA"/>
</dbReference>
<dbReference type="GO" id="GO:0052655">
    <property type="term" value="F:L-valine-2-oxoglutarate transaminase activity"/>
    <property type="evidence" value="ECO:0007669"/>
    <property type="project" value="RHEA"/>
</dbReference>
<dbReference type="GO" id="GO:0009097">
    <property type="term" value="P:isoleucine biosynthetic process"/>
    <property type="evidence" value="ECO:0007669"/>
    <property type="project" value="UniProtKB-UniPathway"/>
</dbReference>
<dbReference type="GO" id="GO:0009098">
    <property type="term" value="P:L-leucine biosynthetic process"/>
    <property type="evidence" value="ECO:0007669"/>
    <property type="project" value="UniProtKB-UniPathway"/>
</dbReference>
<dbReference type="GO" id="GO:0009099">
    <property type="term" value="P:L-valine biosynthetic process"/>
    <property type="evidence" value="ECO:0007669"/>
    <property type="project" value="UniProtKB-UniPathway"/>
</dbReference>
<dbReference type="FunFam" id="3.20.10.10:FF:000002">
    <property type="entry name" value="D-alanine aminotransferase"/>
    <property type="match status" value="1"/>
</dbReference>
<dbReference type="Gene3D" id="3.30.470.10">
    <property type="match status" value="1"/>
</dbReference>
<dbReference type="Gene3D" id="3.20.10.10">
    <property type="entry name" value="D-amino Acid Aminotransferase, subunit A, domain 2"/>
    <property type="match status" value="1"/>
</dbReference>
<dbReference type="InterPro" id="IPR001544">
    <property type="entry name" value="Aminotrans_IV"/>
</dbReference>
<dbReference type="InterPro" id="IPR018300">
    <property type="entry name" value="Aminotrans_IV_CS"/>
</dbReference>
<dbReference type="InterPro" id="IPR036038">
    <property type="entry name" value="Aminotransferase-like"/>
</dbReference>
<dbReference type="InterPro" id="IPR043132">
    <property type="entry name" value="BCAT-like_C"/>
</dbReference>
<dbReference type="InterPro" id="IPR043131">
    <property type="entry name" value="BCAT-like_N"/>
</dbReference>
<dbReference type="InterPro" id="IPR050571">
    <property type="entry name" value="Class-IV_PLP-Dep_Aminotrnsfr"/>
</dbReference>
<dbReference type="NCBIfam" id="NF005146">
    <property type="entry name" value="PRK06606.1"/>
    <property type="match status" value="1"/>
</dbReference>
<dbReference type="PANTHER" id="PTHR42743">
    <property type="entry name" value="AMINO-ACID AMINOTRANSFERASE"/>
    <property type="match status" value="1"/>
</dbReference>
<dbReference type="PANTHER" id="PTHR42743:SF11">
    <property type="entry name" value="AMINODEOXYCHORISMATE LYASE"/>
    <property type="match status" value="1"/>
</dbReference>
<dbReference type="Pfam" id="PF01063">
    <property type="entry name" value="Aminotran_4"/>
    <property type="match status" value="1"/>
</dbReference>
<dbReference type="SUPFAM" id="SSF56752">
    <property type="entry name" value="D-aminoacid aminotransferase-like PLP-dependent enzymes"/>
    <property type="match status" value="1"/>
</dbReference>
<dbReference type="PROSITE" id="PS00770">
    <property type="entry name" value="AA_TRANSFER_CLASS_4"/>
    <property type="match status" value="1"/>
</dbReference>
<sequence length="289" mass="32702">MTKNSENNLWYIWINGELVPYELATVHALTHSLHYSGSVFEGERAYNGKVFKLKEHTERLVKSAEVLGLKVPYNVEEIIKAHELLIEKNKIQDAYIRPLVWCGSESLNIINPKLSTNVLIAAVPSMPRAFAAGFNLYVSRWRKAAPNMMPVQSKSAAHYNMAITSKKEAKDLGYDDALLLDYEGYIAECTTTNIFFVKDNVLYTPIADRFLDGITRQTIIEIAKNLGLEVKEERLKLEQIEDFISCFATGTAIEVQNINSIDIGNKKVIFNDHKIADVLKEEYGKIVRG</sequence>
<keyword id="KW-0028">Amino-acid biosynthesis</keyword>
<keyword id="KW-0032">Aminotransferase</keyword>
<keyword id="KW-0100">Branched-chain amino acid biosynthesis</keyword>
<keyword id="KW-0663">Pyridoxal phosphate</keyword>
<keyword id="KW-0808">Transferase</keyword>
<organism>
    <name type="scientific">Rickettsia bellii (strain RML369-C)</name>
    <dbReference type="NCBI Taxonomy" id="336407"/>
    <lineage>
        <taxon>Bacteria</taxon>
        <taxon>Pseudomonadati</taxon>
        <taxon>Pseudomonadota</taxon>
        <taxon>Alphaproteobacteria</taxon>
        <taxon>Rickettsiales</taxon>
        <taxon>Rickettsiaceae</taxon>
        <taxon>Rickettsieae</taxon>
        <taxon>Rickettsia</taxon>
        <taxon>belli group</taxon>
    </lineage>
</organism>
<comment type="function">
    <text evidence="1">Acts on leucine, isoleucine and valine.</text>
</comment>
<comment type="catalytic activity">
    <reaction>
        <text>L-leucine + 2-oxoglutarate = 4-methyl-2-oxopentanoate + L-glutamate</text>
        <dbReference type="Rhea" id="RHEA:18321"/>
        <dbReference type="ChEBI" id="CHEBI:16810"/>
        <dbReference type="ChEBI" id="CHEBI:17865"/>
        <dbReference type="ChEBI" id="CHEBI:29985"/>
        <dbReference type="ChEBI" id="CHEBI:57427"/>
        <dbReference type="EC" id="2.6.1.42"/>
    </reaction>
</comment>
<comment type="catalytic activity">
    <reaction>
        <text>L-isoleucine + 2-oxoglutarate = (S)-3-methyl-2-oxopentanoate + L-glutamate</text>
        <dbReference type="Rhea" id="RHEA:24801"/>
        <dbReference type="ChEBI" id="CHEBI:16810"/>
        <dbReference type="ChEBI" id="CHEBI:29985"/>
        <dbReference type="ChEBI" id="CHEBI:35146"/>
        <dbReference type="ChEBI" id="CHEBI:58045"/>
        <dbReference type="EC" id="2.6.1.42"/>
    </reaction>
</comment>
<comment type="catalytic activity">
    <reaction>
        <text>L-valine + 2-oxoglutarate = 3-methyl-2-oxobutanoate + L-glutamate</text>
        <dbReference type="Rhea" id="RHEA:24813"/>
        <dbReference type="ChEBI" id="CHEBI:11851"/>
        <dbReference type="ChEBI" id="CHEBI:16810"/>
        <dbReference type="ChEBI" id="CHEBI:29985"/>
        <dbReference type="ChEBI" id="CHEBI:57762"/>
        <dbReference type="EC" id="2.6.1.42"/>
    </reaction>
</comment>
<comment type="cofactor">
    <cofactor evidence="1">
        <name>pyridoxal 5'-phosphate</name>
        <dbReference type="ChEBI" id="CHEBI:597326"/>
    </cofactor>
</comment>
<comment type="pathway">
    <text>Amino-acid biosynthesis; L-isoleucine biosynthesis; L-isoleucine from 2-oxobutanoate: step 4/4.</text>
</comment>
<comment type="pathway">
    <text>Amino-acid biosynthesis; L-leucine biosynthesis; L-leucine from 3-methyl-2-oxobutanoate: step 4/4.</text>
</comment>
<comment type="pathway">
    <text>Amino-acid biosynthesis; L-valine biosynthesis; L-valine from pyruvate: step 4/4.</text>
</comment>
<comment type="similarity">
    <text evidence="2">Belongs to the class-IV pyridoxal-phosphate-dependent aminotransferase family.</text>
</comment>
<accession>Q1RIJ2</accession>
<feature type="chain" id="PRO_0000280900" description="Probable branched-chain-amino-acid aminotransferase">
    <location>
        <begin position="1"/>
        <end position="289"/>
    </location>
</feature>
<feature type="modified residue" description="N6-(pyridoxal phosphate)lysine" evidence="1">
    <location>
        <position position="154"/>
    </location>
</feature>
<protein>
    <recommendedName>
        <fullName>Probable branched-chain-amino-acid aminotransferase</fullName>
        <shortName>BCAT</shortName>
        <ecNumber>2.6.1.42</ecNumber>
    </recommendedName>
</protein>
<gene>
    <name type="primary">ilvE</name>
    <name type="ordered locus">RBE_0741</name>
</gene>